<accession>A7N142</accession>
<gene>
    <name evidence="1" type="primary">fluC</name>
    <name evidence="1" type="synonym">crcB</name>
    <name type="ordered locus">VIBHAR_00367</name>
</gene>
<reference key="1">
    <citation type="submission" date="2007-08" db="EMBL/GenBank/DDBJ databases">
        <authorList>
            <consortium name="The Vibrio harveyi Genome Sequencing Project"/>
            <person name="Bassler B."/>
            <person name="Clifton S.W."/>
            <person name="Fulton L."/>
            <person name="Delehaunty K."/>
            <person name="Fronick C."/>
            <person name="Harrison M."/>
            <person name="Markivic C."/>
            <person name="Fulton R."/>
            <person name="Tin-Wollam A.-M."/>
            <person name="Shah N."/>
            <person name="Pepin K."/>
            <person name="Nash W."/>
            <person name="Thiruvilangam P."/>
            <person name="Bhonagiri V."/>
            <person name="Waters C."/>
            <person name="Tu K.C."/>
            <person name="Irgon J."/>
            <person name="Wilson R.K."/>
        </authorList>
    </citation>
    <scope>NUCLEOTIDE SEQUENCE [LARGE SCALE GENOMIC DNA]</scope>
    <source>
        <strain>ATCC BAA-1116 / BB120</strain>
    </source>
</reference>
<sequence>MGQLSVLGFIALGGAFGACSRYLISELCVMLLGRGFPYGTLTVNVVGSFIMGLLIAAFETELMVTDPWRQIIGLGFLGALTTFSTFSMDNVLLMQQGAFFKMGLNVLLNVVLSISAAWIGFQLLMRS</sequence>
<name>FLUC_VIBC1</name>
<protein>
    <recommendedName>
        <fullName evidence="1">Fluoride-specific ion channel FluC</fullName>
    </recommendedName>
</protein>
<feature type="chain" id="PRO_1000026426" description="Fluoride-specific ion channel FluC">
    <location>
        <begin position="1"/>
        <end position="127"/>
    </location>
</feature>
<feature type="transmembrane region" description="Helical" evidence="1">
    <location>
        <begin position="4"/>
        <end position="24"/>
    </location>
</feature>
<feature type="transmembrane region" description="Helical" evidence="1">
    <location>
        <begin position="38"/>
        <end position="58"/>
    </location>
</feature>
<feature type="transmembrane region" description="Helical" evidence="1">
    <location>
        <begin position="71"/>
        <end position="91"/>
    </location>
</feature>
<feature type="transmembrane region" description="Helical" evidence="1">
    <location>
        <begin position="104"/>
        <end position="124"/>
    </location>
</feature>
<feature type="binding site" evidence="1">
    <location>
        <position position="78"/>
    </location>
    <ligand>
        <name>Na(+)</name>
        <dbReference type="ChEBI" id="CHEBI:29101"/>
        <note>structural</note>
    </ligand>
</feature>
<feature type="binding site" evidence="1">
    <location>
        <position position="81"/>
    </location>
    <ligand>
        <name>Na(+)</name>
        <dbReference type="ChEBI" id="CHEBI:29101"/>
        <note>structural</note>
    </ligand>
</feature>
<evidence type="ECO:0000255" key="1">
    <source>
        <dbReference type="HAMAP-Rule" id="MF_00454"/>
    </source>
</evidence>
<comment type="function">
    <text evidence="1">Fluoride-specific ion channel. Important for reducing fluoride concentration in the cell, thus reducing its toxicity.</text>
</comment>
<comment type="catalytic activity">
    <reaction evidence="1">
        <text>fluoride(in) = fluoride(out)</text>
        <dbReference type="Rhea" id="RHEA:76159"/>
        <dbReference type="ChEBI" id="CHEBI:17051"/>
    </reaction>
    <physiologicalReaction direction="left-to-right" evidence="1">
        <dbReference type="Rhea" id="RHEA:76160"/>
    </physiologicalReaction>
</comment>
<comment type="activity regulation">
    <text evidence="1">Na(+) is not transported, but it plays an essential structural role and its presence is essential for fluoride channel function.</text>
</comment>
<comment type="subcellular location">
    <subcellularLocation>
        <location evidence="1">Cell inner membrane</location>
        <topology evidence="1">Multi-pass membrane protein</topology>
    </subcellularLocation>
</comment>
<comment type="similarity">
    <text evidence="1">Belongs to the fluoride channel Fluc/FEX (TC 1.A.43) family.</text>
</comment>
<organism>
    <name type="scientific">Vibrio campbellii (strain ATCC BAA-1116)</name>
    <dbReference type="NCBI Taxonomy" id="2902295"/>
    <lineage>
        <taxon>Bacteria</taxon>
        <taxon>Pseudomonadati</taxon>
        <taxon>Pseudomonadota</taxon>
        <taxon>Gammaproteobacteria</taxon>
        <taxon>Vibrionales</taxon>
        <taxon>Vibrionaceae</taxon>
        <taxon>Vibrio</taxon>
    </lineage>
</organism>
<proteinExistence type="inferred from homology"/>
<dbReference type="EMBL" id="CP000789">
    <property type="protein sequence ID" value="ABU69388.1"/>
    <property type="molecule type" value="Genomic_DNA"/>
</dbReference>
<dbReference type="RefSeq" id="WP_005430379.1">
    <property type="nucleotide sequence ID" value="NC_022269.1"/>
</dbReference>
<dbReference type="SMR" id="A7N142"/>
<dbReference type="GeneID" id="83583418"/>
<dbReference type="KEGG" id="vha:VIBHAR_00367"/>
<dbReference type="PATRIC" id="fig|338187.25.peg.2215"/>
<dbReference type="Proteomes" id="UP000008152">
    <property type="component" value="Chromosome I"/>
</dbReference>
<dbReference type="GO" id="GO:0005886">
    <property type="term" value="C:plasma membrane"/>
    <property type="evidence" value="ECO:0007669"/>
    <property type="project" value="UniProtKB-SubCell"/>
</dbReference>
<dbReference type="GO" id="GO:0062054">
    <property type="term" value="F:fluoride channel activity"/>
    <property type="evidence" value="ECO:0007669"/>
    <property type="project" value="UniProtKB-UniRule"/>
</dbReference>
<dbReference type="GO" id="GO:0046872">
    <property type="term" value="F:metal ion binding"/>
    <property type="evidence" value="ECO:0007669"/>
    <property type="project" value="UniProtKB-KW"/>
</dbReference>
<dbReference type="GO" id="GO:0140114">
    <property type="term" value="P:cellular detoxification of fluoride"/>
    <property type="evidence" value="ECO:0007669"/>
    <property type="project" value="UniProtKB-UniRule"/>
</dbReference>
<dbReference type="HAMAP" id="MF_00454">
    <property type="entry name" value="FluC"/>
    <property type="match status" value="1"/>
</dbReference>
<dbReference type="InterPro" id="IPR003691">
    <property type="entry name" value="FluC"/>
</dbReference>
<dbReference type="NCBIfam" id="TIGR00494">
    <property type="entry name" value="crcB"/>
    <property type="match status" value="1"/>
</dbReference>
<dbReference type="NCBIfam" id="NF010796">
    <property type="entry name" value="PRK14200.1"/>
    <property type="match status" value="1"/>
</dbReference>
<dbReference type="PANTHER" id="PTHR28259">
    <property type="entry name" value="FLUORIDE EXPORT PROTEIN 1-RELATED"/>
    <property type="match status" value="1"/>
</dbReference>
<dbReference type="PANTHER" id="PTHR28259:SF1">
    <property type="entry name" value="FLUORIDE EXPORT PROTEIN 1-RELATED"/>
    <property type="match status" value="1"/>
</dbReference>
<dbReference type="Pfam" id="PF02537">
    <property type="entry name" value="CRCB"/>
    <property type="match status" value="1"/>
</dbReference>
<keyword id="KW-0997">Cell inner membrane</keyword>
<keyword id="KW-1003">Cell membrane</keyword>
<keyword id="KW-0407">Ion channel</keyword>
<keyword id="KW-0406">Ion transport</keyword>
<keyword id="KW-0472">Membrane</keyword>
<keyword id="KW-0479">Metal-binding</keyword>
<keyword id="KW-0915">Sodium</keyword>
<keyword id="KW-0812">Transmembrane</keyword>
<keyword id="KW-1133">Transmembrane helix</keyword>
<keyword id="KW-0813">Transport</keyword>